<gene>
    <name type="primary">Ccna1</name>
</gene>
<feature type="chain" id="PRO_0000080334" description="Cyclin-A1">
    <location>
        <begin position="1"/>
        <end position="421"/>
    </location>
</feature>
<feature type="region of interest" description="Disordered" evidence="3">
    <location>
        <begin position="1"/>
        <end position="21"/>
    </location>
</feature>
<feature type="sequence conflict" description="In Ref. 1; CAA59053." evidence="8" ref="1">
    <original>R</original>
    <variation>P</variation>
    <location>
        <position position="176"/>
    </location>
</feature>
<keyword id="KW-0131">Cell cycle</keyword>
<keyword id="KW-0132">Cell division</keyword>
<keyword id="KW-0195">Cyclin</keyword>
<keyword id="KW-0963">Cytoplasm</keyword>
<keyword id="KW-0206">Cytoskeleton</keyword>
<keyword id="KW-0217">Developmental protein</keyword>
<keyword id="KW-0221">Differentiation</keyword>
<keyword id="KW-0469">Meiosis</keyword>
<keyword id="KW-0498">Mitosis</keyword>
<keyword id="KW-0539">Nucleus</keyword>
<keyword id="KW-1185">Reference proteome</keyword>
<keyword id="KW-0744">Spermatogenesis</keyword>
<keyword id="KW-0832">Ubl conjugation</keyword>
<sequence>MHRQSSKSGVALPPVGQGPDACQMLSRAQLGQDPPQRTVLGVLTENEQYRRTCGQEITAIRCFSGSENVFPAAGKKVLSDHGVNEPAKRGFDIYMDDPEQGDRDTCSGKEGIIFEDVYEVDTSMLKSDLHFLLDFNTVSPMLVDPTTHAQSEEATDFGSDVINVTEYAEEIHRYLREAEVRHRPKAHYMRKQPDITEGMRAILVDWLVEVGEEYKLRTETLYLAVNFLDRFLSCMSVLRGKLQLVGTAAILLASKYEEIYPPDVDEFVYITDDTYTKRQLLRMEHLLLKVLAFDLTVPTTNQFLLQYLRRQGVCIRTENLAKYVAELSLLEADPFLKYLPSLVAAAAYCLANYIVNRHFWPETLAAFTGYSLNEIVPCLSELHKACLSIPHRPQQAIREKYKASKYLHVSLMEPPVVLPLQ</sequence>
<dbReference type="EMBL" id="X84311">
    <property type="protein sequence ID" value="CAA59053.1"/>
    <property type="molecule type" value="mRNA"/>
</dbReference>
<dbReference type="EMBL" id="AK077114">
    <property type="protein sequence ID" value="BAC36619.1"/>
    <property type="molecule type" value="mRNA"/>
</dbReference>
<dbReference type="EMBL" id="BC120518">
    <property type="protein sequence ID" value="AAI20519.1"/>
    <property type="molecule type" value="mRNA"/>
</dbReference>
<dbReference type="EMBL" id="BC125436">
    <property type="protein sequence ID" value="AAI25437.1"/>
    <property type="molecule type" value="mRNA"/>
</dbReference>
<dbReference type="CCDS" id="CCDS17356.1"/>
<dbReference type="RefSeq" id="NP_001292150.1">
    <property type="nucleotide sequence ID" value="NM_001305221.2"/>
</dbReference>
<dbReference type="RefSeq" id="NP_001415333.1">
    <property type="nucleotide sequence ID" value="NM_001428404.1"/>
</dbReference>
<dbReference type="RefSeq" id="NP_031654.2">
    <property type="nucleotide sequence ID" value="NM_007628.4"/>
</dbReference>
<dbReference type="RefSeq" id="XP_006501012.1">
    <property type="nucleotide sequence ID" value="XM_006500949.2"/>
</dbReference>
<dbReference type="RefSeq" id="XP_006501013.1">
    <property type="nucleotide sequence ID" value="XM_006500950.5"/>
</dbReference>
<dbReference type="RefSeq" id="XP_006501014.1">
    <property type="nucleotide sequence ID" value="XM_006500951.4"/>
</dbReference>
<dbReference type="RefSeq" id="XP_006501015.1">
    <property type="nucleotide sequence ID" value="XM_006500952.4"/>
</dbReference>
<dbReference type="RefSeq" id="XP_011238305.1">
    <property type="nucleotide sequence ID" value="XM_011240003.2"/>
</dbReference>
<dbReference type="RefSeq" id="XP_036018766.1">
    <property type="nucleotide sequence ID" value="XM_036162873.1"/>
</dbReference>
<dbReference type="SMR" id="Q61456"/>
<dbReference type="BioGRID" id="198544">
    <property type="interactions" value="6"/>
</dbReference>
<dbReference type="ComplexPortal" id="CPX-2061">
    <property type="entry name" value="Cyclin A1-CDK1 complex"/>
</dbReference>
<dbReference type="ComplexPortal" id="CPX-2065">
    <property type="entry name" value="Cyclin A1-CDK2 complex"/>
</dbReference>
<dbReference type="FunCoup" id="Q61456">
    <property type="interactions" value="405"/>
</dbReference>
<dbReference type="STRING" id="10090.ENSMUSP00000142692"/>
<dbReference type="iPTMnet" id="Q61456"/>
<dbReference type="PhosphoSitePlus" id="Q61456"/>
<dbReference type="SwissPalm" id="Q61456"/>
<dbReference type="PaxDb" id="10090-ENSMUSP00000029368"/>
<dbReference type="ProteomicsDB" id="281335"/>
<dbReference type="Antibodypedia" id="4520">
    <property type="antibodies" value="536 antibodies from 37 providers"/>
</dbReference>
<dbReference type="DNASU" id="12427"/>
<dbReference type="Ensembl" id="ENSMUST00000029368.7">
    <property type="protein sequence ID" value="ENSMUSP00000029368.3"/>
    <property type="gene ID" value="ENSMUSG00000027793.7"/>
</dbReference>
<dbReference type="Ensembl" id="ENSMUST00000197238.5">
    <property type="protein sequence ID" value="ENSMUSP00000142692.2"/>
    <property type="gene ID" value="ENSMUSG00000027793.7"/>
</dbReference>
<dbReference type="Ensembl" id="ENSMUST00000198320.5">
    <property type="protein sequence ID" value="ENSMUSP00000143447.2"/>
    <property type="gene ID" value="ENSMUSG00000027793.7"/>
</dbReference>
<dbReference type="GeneID" id="12427"/>
<dbReference type="KEGG" id="mmu:12427"/>
<dbReference type="UCSC" id="uc008pfy.3">
    <property type="organism name" value="mouse"/>
</dbReference>
<dbReference type="AGR" id="MGI:108042"/>
<dbReference type="CTD" id="8900"/>
<dbReference type="MGI" id="MGI:108042">
    <property type="gene designation" value="Ccna1"/>
</dbReference>
<dbReference type="VEuPathDB" id="HostDB:ENSMUSG00000027793"/>
<dbReference type="eggNOG" id="KOG0654">
    <property type="taxonomic scope" value="Eukaryota"/>
</dbReference>
<dbReference type="GeneTree" id="ENSGT00940000157940"/>
<dbReference type="HOGENOM" id="CLU_020695_3_2_1"/>
<dbReference type="InParanoid" id="Q61456"/>
<dbReference type="OMA" id="YKSSKYC"/>
<dbReference type="OrthoDB" id="5590282at2759"/>
<dbReference type="PhylomeDB" id="Q61456"/>
<dbReference type="TreeFam" id="TF101002"/>
<dbReference type="Reactome" id="R-MMU-1538133">
    <property type="pathway name" value="G0 and Early G1"/>
</dbReference>
<dbReference type="Reactome" id="R-MMU-171319">
    <property type="pathway name" value="Telomere Extension By Telomerase"/>
</dbReference>
<dbReference type="Reactome" id="R-MMU-174184">
    <property type="pathway name" value="Cdc20:Phospho-APC/C mediated degradation of Cyclin A"/>
</dbReference>
<dbReference type="Reactome" id="R-MMU-176408">
    <property type="pathway name" value="Regulation of APC/C activators between G1/S and early anaphase"/>
</dbReference>
<dbReference type="Reactome" id="R-MMU-187577">
    <property type="pathway name" value="SCF(Skp2)-mediated degradation of p27/p21"/>
</dbReference>
<dbReference type="Reactome" id="R-MMU-2559582">
    <property type="pathway name" value="Senescence-Associated Secretory Phenotype (SASP)"/>
</dbReference>
<dbReference type="Reactome" id="R-MMU-2559586">
    <property type="pathway name" value="DNA Damage/Telomere Stress Induced Senescence"/>
</dbReference>
<dbReference type="Reactome" id="R-MMU-5689880">
    <property type="pathway name" value="Ub-specific processing proteases"/>
</dbReference>
<dbReference type="Reactome" id="R-MMU-5693607">
    <property type="pathway name" value="Processing of DNA double-strand break ends"/>
</dbReference>
<dbReference type="Reactome" id="R-MMU-6804116">
    <property type="pathway name" value="TP53 Regulates Transcription of Genes Involved in G1 Cell Cycle Arrest"/>
</dbReference>
<dbReference type="Reactome" id="R-MMU-6804756">
    <property type="pathway name" value="Regulation of TP53 Activity through Phosphorylation"/>
</dbReference>
<dbReference type="Reactome" id="R-MMU-6804757">
    <property type="pathway name" value="Regulation of TP53 Degradation"/>
</dbReference>
<dbReference type="Reactome" id="R-MMU-68911">
    <property type="pathway name" value="G2 Phase"/>
</dbReference>
<dbReference type="Reactome" id="R-MMU-68949">
    <property type="pathway name" value="Orc1 removal from chromatin"/>
</dbReference>
<dbReference type="Reactome" id="R-MMU-69017">
    <property type="pathway name" value="CDK-mediated phosphorylation and removal of Cdc6"/>
</dbReference>
<dbReference type="Reactome" id="R-MMU-69273">
    <property type="pathway name" value="Cyclin A/B1/B2 associated events during G2/M transition"/>
</dbReference>
<dbReference type="Reactome" id="R-MMU-69563">
    <property type="pathway name" value="p53-Dependent G1 DNA Damage Response"/>
</dbReference>
<dbReference type="Reactome" id="R-MMU-69656">
    <property type="pathway name" value="Cyclin A:Cdk2-associated events at S phase entry"/>
</dbReference>
<dbReference type="BioGRID-ORCS" id="12427">
    <property type="hits" value="1 hit in 78 CRISPR screens"/>
</dbReference>
<dbReference type="PRO" id="PR:Q61456"/>
<dbReference type="Proteomes" id="UP000000589">
    <property type="component" value="Chromosome 3"/>
</dbReference>
<dbReference type="RNAct" id="Q61456">
    <property type="molecule type" value="protein"/>
</dbReference>
<dbReference type="Bgee" id="ENSMUSG00000027793">
    <property type="expression patterns" value="Expressed in spermatid and 38 other cell types or tissues"/>
</dbReference>
<dbReference type="ExpressionAtlas" id="Q61456">
    <property type="expression patterns" value="baseline and differential"/>
</dbReference>
<dbReference type="GO" id="GO:0097123">
    <property type="term" value="C:cyclin A1-CDK2 complex"/>
    <property type="evidence" value="ECO:0000314"/>
    <property type="project" value="MGI"/>
</dbReference>
<dbReference type="GO" id="GO:0005737">
    <property type="term" value="C:cytoplasm"/>
    <property type="evidence" value="ECO:0007669"/>
    <property type="project" value="UniProtKB-KW"/>
</dbReference>
<dbReference type="GO" id="GO:0005634">
    <property type="term" value="C:nucleus"/>
    <property type="evidence" value="ECO:0007669"/>
    <property type="project" value="UniProtKB-SubCell"/>
</dbReference>
<dbReference type="GO" id="GO:0005819">
    <property type="term" value="C:spindle"/>
    <property type="evidence" value="ECO:0007669"/>
    <property type="project" value="UniProtKB-SubCell"/>
</dbReference>
<dbReference type="GO" id="GO:0030154">
    <property type="term" value="P:cell differentiation"/>
    <property type="evidence" value="ECO:0007669"/>
    <property type="project" value="UniProtKB-KW"/>
</dbReference>
<dbReference type="GO" id="GO:0051301">
    <property type="term" value="P:cell division"/>
    <property type="evidence" value="ECO:0007669"/>
    <property type="project" value="UniProtKB-KW"/>
</dbReference>
<dbReference type="GO" id="GO:0051321">
    <property type="term" value="P:meiotic cell cycle"/>
    <property type="evidence" value="ECO:0007669"/>
    <property type="project" value="UniProtKB-KW"/>
</dbReference>
<dbReference type="GO" id="GO:0007283">
    <property type="term" value="P:spermatogenesis"/>
    <property type="evidence" value="ECO:0007669"/>
    <property type="project" value="UniProtKB-KW"/>
</dbReference>
<dbReference type="CDD" id="cd20560">
    <property type="entry name" value="CYCLIN_CCNA1_rpt1"/>
    <property type="match status" value="1"/>
</dbReference>
<dbReference type="CDD" id="cd20563">
    <property type="entry name" value="CYCLIN_CCNA1_rpt2"/>
    <property type="match status" value="1"/>
</dbReference>
<dbReference type="FunFam" id="1.10.472.10:FF:000001">
    <property type="entry name" value="G2/mitotic-specific cyclin"/>
    <property type="match status" value="1"/>
</dbReference>
<dbReference type="Gene3D" id="1.10.472.10">
    <property type="entry name" value="Cyclin-like"/>
    <property type="match status" value="2"/>
</dbReference>
<dbReference type="InterPro" id="IPR039361">
    <property type="entry name" value="Cyclin"/>
</dbReference>
<dbReference type="InterPro" id="IPR032447">
    <property type="entry name" value="Cyclin-A_N"/>
</dbReference>
<dbReference type="InterPro" id="IPR013763">
    <property type="entry name" value="Cyclin-like_dom"/>
</dbReference>
<dbReference type="InterPro" id="IPR036915">
    <property type="entry name" value="Cyclin-like_sf"/>
</dbReference>
<dbReference type="InterPro" id="IPR004367">
    <property type="entry name" value="Cyclin_C-dom"/>
</dbReference>
<dbReference type="InterPro" id="IPR006671">
    <property type="entry name" value="Cyclin_N"/>
</dbReference>
<dbReference type="InterPro" id="IPR048258">
    <property type="entry name" value="Cyclins_cyclin-box"/>
</dbReference>
<dbReference type="PANTHER" id="PTHR10177">
    <property type="entry name" value="CYCLINS"/>
    <property type="match status" value="1"/>
</dbReference>
<dbReference type="Pfam" id="PF02984">
    <property type="entry name" value="Cyclin_C"/>
    <property type="match status" value="1"/>
</dbReference>
<dbReference type="Pfam" id="PF00134">
    <property type="entry name" value="Cyclin_N"/>
    <property type="match status" value="1"/>
</dbReference>
<dbReference type="Pfam" id="PF16500">
    <property type="entry name" value="Cyclin_N2"/>
    <property type="match status" value="1"/>
</dbReference>
<dbReference type="SMART" id="SM00385">
    <property type="entry name" value="CYCLIN"/>
    <property type="match status" value="2"/>
</dbReference>
<dbReference type="SMART" id="SM01332">
    <property type="entry name" value="Cyclin_C"/>
    <property type="match status" value="1"/>
</dbReference>
<dbReference type="SUPFAM" id="SSF47954">
    <property type="entry name" value="Cyclin-like"/>
    <property type="match status" value="2"/>
</dbReference>
<dbReference type="PROSITE" id="PS00292">
    <property type="entry name" value="CYCLINS"/>
    <property type="match status" value="1"/>
</dbReference>
<reference key="1">
    <citation type="journal article" date="1996" name="Development">
        <title>A distinct cyclin A is expressed in germ cells in the mouse.</title>
        <authorList>
            <person name="Sweeney C."/>
            <person name="Murphy M."/>
            <person name="Kubelka M."/>
            <person name="Ravnik S.E."/>
            <person name="Hawkins C.F."/>
            <person name="Wolgemuth D.J."/>
            <person name="Carrington M."/>
        </authorList>
    </citation>
    <scope>NUCLEOTIDE SEQUENCE [MRNA]</scope>
    <scope>SUBCELLULAR LOCATION</scope>
    <scope>TISSUE SPECIFICITY</scope>
    <source>
        <strain>BALB/cJ</strain>
        <tissue>Testis</tissue>
    </source>
</reference>
<reference key="2">
    <citation type="journal article" date="2005" name="Science">
        <title>The transcriptional landscape of the mammalian genome.</title>
        <authorList>
            <person name="Carninci P."/>
            <person name="Kasukawa T."/>
            <person name="Katayama S."/>
            <person name="Gough J."/>
            <person name="Frith M.C."/>
            <person name="Maeda N."/>
            <person name="Oyama R."/>
            <person name="Ravasi T."/>
            <person name="Lenhard B."/>
            <person name="Wells C."/>
            <person name="Kodzius R."/>
            <person name="Shimokawa K."/>
            <person name="Bajic V.B."/>
            <person name="Brenner S.E."/>
            <person name="Batalov S."/>
            <person name="Forrest A.R."/>
            <person name="Zavolan M."/>
            <person name="Davis M.J."/>
            <person name="Wilming L.G."/>
            <person name="Aidinis V."/>
            <person name="Allen J.E."/>
            <person name="Ambesi-Impiombato A."/>
            <person name="Apweiler R."/>
            <person name="Aturaliya R.N."/>
            <person name="Bailey T.L."/>
            <person name="Bansal M."/>
            <person name="Baxter L."/>
            <person name="Beisel K.W."/>
            <person name="Bersano T."/>
            <person name="Bono H."/>
            <person name="Chalk A.M."/>
            <person name="Chiu K.P."/>
            <person name="Choudhary V."/>
            <person name="Christoffels A."/>
            <person name="Clutterbuck D.R."/>
            <person name="Crowe M.L."/>
            <person name="Dalla E."/>
            <person name="Dalrymple B.P."/>
            <person name="de Bono B."/>
            <person name="Della Gatta G."/>
            <person name="di Bernardo D."/>
            <person name="Down T."/>
            <person name="Engstrom P."/>
            <person name="Fagiolini M."/>
            <person name="Faulkner G."/>
            <person name="Fletcher C.F."/>
            <person name="Fukushima T."/>
            <person name="Furuno M."/>
            <person name="Futaki S."/>
            <person name="Gariboldi M."/>
            <person name="Georgii-Hemming P."/>
            <person name="Gingeras T.R."/>
            <person name="Gojobori T."/>
            <person name="Green R.E."/>
            <person name="Gustincich S."/>
            <person name="Harbers M."/>
            <person name="Hayashi Y."/>
            <person name="Hensch T.K."/>
            <person name="Hirokawa N."/>
            <person name="Hill D."/>
            <person name="Huminiecki L."/>
            <person name="Iacono M."/>
            <person name="Ikeo K."/>
            <person name="Iwama A."/>
            <person name="Ishikawa T."/>
            <person name="Jakt M."/>
            <person name="Kanapin A."/>
            <person name="Katoh M."/>
            <person name="Kawasawa Y."/>
            <person name="Kelso J."/>
            <person name="Kitamura H."/>
            <person name="Kitano H."/>
            <person name="Kollias G."/>
            <person name="Krishnan S.P."/>
            <person name="Kruger A."/>
            <person name="Kummerfeld S.K."/>
            <person name="Kurochkin I.V."/>
            <person name="Lareau L.F."/>
            <person name="Lazarevic D."/>
            <person name="Lipovich L."/>
            <person name="Liu J."/>
            <person name="Liuni S."/>
            <person name="McWilliam S."/>
            <person name="Madan Babu M."/>
            <person name="Madera M."/>
            <person name="Marchionni L."/>
            <person name="Matsuda H."/>
            <person name="Matsuzawa S."/>
            <person name="Miki H."/>
            <person name="Mignone F."/>
            <person name="Miyake S."/>
            <person name="Morris K."/>
            <person name="Mottagui-Tabar S."/>
            <person name="Mulder N."/>
            <person name="Nakano N."/>
            <person name="Nakauchi H."/>
            <person name="Ng P."/>
            <person name="Nilsson R."/>
            <person name="Nishiguchi S."/>
            <person name="Nishikawa S."/>
            <person name="Nori F."/>
            <person name="Ohara O."/>
            <person name="Okazaki Y."/>
            <person name="Orlando V."/>
            <person name="Pang K.C."/>
            <person name="Pavan W.J."/>
            <person name="Pavesi G."/>
            <person name="Pesole G."/>
            <person name="Petrovsky N."/>
            <person name="Piazza S."/>
            <person name="Reed J."/>
            <person name="Reid J.F."/>
            <person name="Ring B.Z."/>
            <person name="Ringwald M."/>
            <person name="Rost B."/>
            <person name="Ruan Y."/>
            <person name="Salzberg S.L."/>
            <person name="Sandelin A."/>
            <person name="Schneider C."/>
            <person name="Schoenbach C."/>
            <person name="Sekiguchi K."/>
            <person name="Semple C.A."/>
            <person name="Seno S."/>
            <person name="Sessa L."/>
            <person name="Sheng Y."/>
            <person name="Shibata Y."/>
            <person name="Shimada H."/>
            <person name="Shimada K."/>
            <person name="Silva D."/>
            <person name="Sinclair B."/>
            <person name="Sperling S."/>
            <person name="Stupka E."/>
            <person name="Sugiura K."/>
            <person name="Sultana R."/>
            <person name="Takenaka Y."/>
            <person name="Taki K."/>
            <person name="Tammoja K."/>
            <person name="Tan S.L."/>
            <person name="Tang S."/>
            <person name="Taylor M.S."/>
            <person name="Tegner J."/>
            <person name="Teichmann S.A."/>
            <person name="Ueda H.R."/>
            <person name="van Nimwegen E."/>
            <person name="Verardo R."/>
            <person name="Wei C.L."/>
            <person name="Yagi K."/>
            <person name="Yamanishi H."/>
            <person name="Zabarovsky E."/>
            <person name="Zhu S."/>
            <person name="Zimmer A."/>
            <person name="Hide W."/>
            <person name="Bult C."/>
            <person name="Grimmond S.M."/>
            <person name="Teasdale R.D."/>
            <person name="Liu E.T."/>
            <person name="Brusic V."/>
            <person name="Quackenbush J."/>
            <person name="Wahlestedt C."/>
            <person name="Mattick J.S."/>
            <person name="Hume D.A."/>
            <person name="Kai C."/>
            <person name="Sasaki D."/>
            <person name="Tomaru Y."/>
            <person name="Fukuda S."/>
            <person name="Kanamori-Katayama M."/>
            <person name="Suzuki M."/>
            <person name="Aoki J."/>
            <person name="Arakawa T."/>
            <person name="Iida J."/>
            <person name="Imamura K."/>
            <person name="Itoh M."/>
            <person name="Kato T."/>
            <person name="Kawaji H."/>
            <person name="Kawagashira N."/>
            <person name="Kawashima T."/>
            <person name="Kojima M."/>
            <person name="Kondo S."/>
            <person name="Konno H."/>
            <person name="Nakano K."/>
            <person name="Ninomiya N."/>
            <person name="Nishio T."/>
            <person name="Okada M."/>
            <person name="Plessy C."/>
            <person name="Shibata K."/>
            <person name="Shiraki T."/>
            <person name="Suzuki S."/>
            <person name="Tagami M."/>
            <person name="Waki K."/>
            <person name="Watahiki A."/>
            <person name="Okamura-Oho Y."/>
            <person name="Suzuki H."/>
            <person name="Kawai J."/>
            <person name="Hayashizaki Y."/>
        </authorList>
    </citation>
    <scope>NUCLEOTIDE SEQUENCE [LARGE SCALE MRNA]</scope>
    <source>
        <strain>C57BL/6J</strain>
        <tissue>Testis</tissue>
    </source>
</reference>
<reference key="3">
    <citation type="journal article" date="2004" name="Genome Res.">
        <title>The status, quality, and expansion of the NIH full-length cDNA project: the Mammalian Gene Collection (MGC).</title>
        <authorList>
            <consortium name="The MGC Project Team"/>
        </authorList>
    </citation>
    <scope>NUCLEOTIDE SEQUENCE [LARGE SCALE MRNA]</scope>
    <source>
        <tissue>Brain</tissue>
    </source>
</reference>
<reference key="4">
    <citation type="journal article" date="1998" name="Nat. Genet.">
        <title>Cyclin A1 is required for meiosis in the male mouse.</title>
        <authorList>
            <person name="Liu D."/>
            <person name="Matzuk M.M."/>
            <person name="Sung W.K."/>
            <person name="Guo Q."/>
            <person name="Wang P."/>
            <person name="Wolgemuth D.J."/>
        </authorList>
    </citation>
    <scope>FUNCTION</scope>
    <scope>DISRUPTION PHENOTYPE</scope>
    <scope>DEVELOPMENTAL STAGE</scope>
</reference>
<reference key="5">
    <citation type="journal article" date="1999" name="Dev. Biol.">
        <title>Regulation of meiosis during mammalian spermatogenesis: the A-type cyclins and their associated cyclin-dependent kinases are differentially expressed in the germ-cell lineage.</title>
        <authorList>
            <person name="Ravnik S.E."/>
            <person name="Wolgemuth D.J."/>
        </authorList>
    </citation>
    <scope>FUNCTION</scope>
    <source>
        <strain>Swiss Webster</strain>
    </source>
</reference>
<reference key="6">
    <citation type="journal article" date="2001" name="Cancer Res.">
        <title>Cables enhances cdk2 tyrosine 15 phosphorylation by Wee1, inhibits cell growth, and is lost in many human colon and squamous cancers.</title>
        <authorList>
            <person name="Wu C.-L."/>
            <person name="Kirley S.D."/>
            <person name="Xiao H."/>
            <person name="Chuang Y."/>
            <person name="Chung D.C."/>
            <person name="Zukerberg L.R."/>
        </authorList>
    </citation>
    <scope>IDENTIFICATION IN A COMPLEX WITH CDK2; CABLES1 AND CCNE1</scope>
</reference>
<proteinExistence type="evidence at protein level"/>
<organism>
    <name type="scientific">Mus musculus</name>
    <name type="common">Mouse</name>
    <dbReference type="NCBI Taxonomy" id="10090"/>
    <lineage>
        <taxon>Eukaryota</taxon>
        <taxon>Metazoa</taxon>
        <taxon>Chordata</taxon>
        <taxon>Craniata</taxon>
        <taxon>Vertebrata</taxon>
        <taxon>Euteleostomi</taxon>
        <taxon>Mammalia</taxon>
        <taxon>Eutheria</taxon>
        <taxon>Euarchontoglires</taxon>
        <taxon>Glires</taxon>
        <taxon>Rodentia</taxon>
        <taxon>Myomorpha</taxon>
        <taxon>Muroidea</taxon>
        <taxon>Muridae</taxon>
        <taxon>Murinae</taxon>
        <taxon>Mus</taxon>
        <taxon>Mus</taxon>
    </lineage>
</organism>
<protein>
    <recommendedName>
        <fullName>Cyclin-A1</fullName>
    </recommendedName>
</protein>
<name>CCNA1_MOUSE</name>
<comment type="function">
    <text evidence="4 7">May be involved in the control of the cell cycle at the G1/S (start) and G2/M (mitosis) transitions. May primarily function in the control of the germline meiotic cell cycle and additionally in the control of mitotic cell cycle in some somatic cells.</text>
</comment>
<comment type="subunit">
    <text evidence="2 5">Interacts with INCA1 and KLHDC9 (By similarity). Interacts with the CDK2 and CDC2 protein kinases to form a serine/threonine kinase holoenzyme complex. The cyclin subunit imparts substrate specificity to the complex. Found in a complex with CDK2, CABLES1 and CCNE1.</text>
</comment>
<comment type="subcellular location">
    <subcellularLocation>
        <location evidence="1">Nucleus</location>
    </subcellularLocation>
    <subcellularLocation>
        <location evidence="6">Cytoplasm</location>
        <location evidence="6">Cytoskeleton</location>
        <location evidence="6">Spindle</location>
    </subcellularLocation>
    <text evidence="6">In oocytes at least, it associates with the spindle during metaphase.</text>
</comment>
<comment type="tissue specificity">
    <text evidence="6">Testis and ovaries.</text>
</comment>
<comment type="developmental stage">
    <text evidence="7">In male germ cells just prior to or during the first, but not the second meiotic division.</text>
</comment>
<comment type="PTM">
    <text evidence="2">Polyubiquitinated via 'Lys-11'-linked ubiquitin by the anaphase-promoting complex (APC/C), leading to its degradation by the proteasome. Deubiquitinated and stabilized by USP37 enables entry into S phase. Ubiquitinated during the G1 phase by the SCF(FBXO31) complex, leading to its proteasomal degradation.</text>
</comment>
<comment type="disruption phenotype">
    <text evidence="7">ales are sterile due to a block of spermatogenesis before the first meiotic division, whereas females are normal.</text>
</comment>
<comment type="similarity">
    <text evidence="8">Belongs to the cyclin family. Cyclin AB subfamily.</text>
</comment>
<evidence type="ECO:0000250" key="1">
    <source>
        <dbReference type="UniProtKB" id="P20248"/>
    </source>
</evidence>
<evidence type="ECO:0000250" key="2">
    <source>
        <dbReference type="UniProtKB" id="P78396"/>
    </source>
</evidence>
<evidence type="ECO:0000256" key="3">
    <source>
        <dbReference type="SAM" id="MobiDB-lite"/>
    </source>
</evidence>
<evidence type="ECO:0000269" key="4">
    <source>
    </source>
</evidence>
<evidence type="ECO:0000269" key="5">
    <source>
    </source>
</evidence>
<evidence type="ECO:0000269" key="6">
    <source>
    </source>
</evidence>
<evidence type="ECO:0000269" key="7">
    <source>
    </source>
</evidence>
<evidence type="ECO:0000305" key="8"/>
<accession>Q61456</accession>
<accession>Q8C5U1</accession>